<organism>
    <name type="scientific">Homo sapiens</name>
    <name type="common">Human</name>
    <dbReference type="NCBI Taxonomy" id="9606"/>
    <lineage>
        <taxon>Eukaryota</taxon>
        <taxon>Metazoa</taxon>
        <taxon>Chordata</taxon>
        <taxon>Craniata</taxon>
        <taxon>Vertebrata</taxon>
        <taxon>Euteleostomi</taxon>
        <taxon>Mammalia</taxon>
        <taxon>Eutheria</taxon>
        <taxon>Euarchontoglires</taxon>
        <taxon>Primates</taxon>
        <taxon>Haplorrhini</taxon>
        <taxon>Catarrhini</taxon>
        <taxon>Hominidae</taxon>
        <taxon>Homo</taxon>
    </lineage>
</organism>
<accession>Q5T0N5</accession>
<accession>J3QSS4</accession>
<accession>Q5T0N6</accession>
<accession>Q6B097</accession>
<accession>Q6P653</accession>
<accession>Q6R4Q4</accession>
<accession>Q9NXG1</accession>
<reference key="1">
    <citation type="journal article" date="2004" name="Cell">
        <title>Toca-1 mediates Cdc42-dependent actin nucleation by activating the N-WASP-WIP complex.</title>
        <authorList>
            <person name="Ho H.-Y.H."/>
            <person name="Rohatgi R."/>
            <person name="Lebensohn A.M."/>
            <person name="Ma L."/>
            <person name="Li J."/>
            <person name="Gygi S.P."/>
            <person name="Kirschner M.W."/>
        </authorList>
    </citation>
    <scope>NUCLEOTIDE SEQUENCE [MRNA] (ISOFORM 3)</scope>
    <scope>FUNCTION</scope>
    <scope>INTERACTION WITH CDC42 AND WASL</scope>
    <scope>MUTAGENESIS OF 441-MET--ASP-443 AND TRP-576</scope>
    <source>
        <tissue>Fetal brain</tissue>
    </source>
</reference>
<reference key="2">
    <citation type="journal article" date="2006" name="Nature">
        <title>The DNA sequence and biological annotation of human chromosome 1.</title>
        <authorList>
            <person name="Gregory S.G."/>
            <person name="Barlow K.F."/>
            <person name="McLay K.E."/>
            <person name="Kaul R."/>
            <person name="Swarbreck D."/>
            <person name="Dunham A."/>
            <person name="Scott C.E."/>
            <person name="Howe K.L."/>
            <person name="Woodfine K."/>
            <person name="Spencer C.C.A."/>
            <person name="Jones M.C."/>
            <person name="Gillson C."/>
            <person name="Searle S."/>
            <person name="Zhou Y."/>
            <person name="Kokocinski F."/>
            <person name="McDonald L."/>
            <person name="Evans R."/>
            <person name="Phillips K."/>
            <person name="Atkinson A."/>
            <person name="Cooper R."/>
            <person name="Jones C."/>
            <person name="Hall R.E."/>
            <person name="Andrews T.D."/>
            <person name="Lloyd C."/>
            <person name="Ainscough R."/>
            <person name="Almeida J.P."/>
            <person name="Ambrose K.D."/>
            <person name="Anderson F."/>
            <person name="Andrew R.W."/>
            <person name="Ashwell R.I.S."/>
            <person name="Aubin K."/>
            <person name="Babbage A.K."/>
            <person name="Bagguley C.L."/>
            <person name="Bailey J."/>
            <person name="Beasley H."/>
            <person name="Bethel G."/>
            <person name="Bird C.P."/>
            <person name="Bray-Allen S."/>
            <person name="Brown J.Y."/>
            <person name="Brown A.J."/>
            <person name="Buckley D."/>
            <person name="Burton J."/>
            <person name="Bye J."/>
            <person name="Carder C."/>
            <person name="Chapman J.C."/>
            <person name="Clark S.Y."/>
            <person name="Clarke G."/>
            <person name="Clee C."/>
            <person name="Cobley V."/>
            <person name="Collier R.E."/>
            <person name="Corby N."/>
            <person name="Coville G.J."/>
            <person name="Davies J."/>
            <person name="Deadman R."/>
            <person name="Dunn M."/>
            <person name="Earthrowl M."/>
            <person name="Ellington A.G."/>
            <person name="Errington H."/>
            <person name="Frankish A."/>
            <person name="Frankland J."/>
            <person name="French L."/>
            <person name="Garner P."/>
            <person name="Garnett J."/>
            <person name="Gay L."/>
            <person name="Ghori M.R.J."/>
            <person name="Gibson R."/>
            <person name="Gilby L.M."/>
            <person name="Gillett W."/>
            <person name="Glithero R.J."/>
            <person name="Grafham D.V."/>
            <person name="Griffiths C."/>
            <person name="Griffiths-Jones S."/>
            <person name="Grocock R."/>
            <person name="Hammond S."/>
            <person name="Harrison E.S.I."/>
            <person name="Hart E."/>
            <person name="Haugen E."/>
            <person name="Heath P.D."/>
            <person name="Holmes S."/>
            <person name="Holt K."/>
            <person name="Howden P.J."/>
            <person name="Hunt A.R."/>
            <person name="Hunt S.E."/>
            <person name="Hunter G."/>
            <person name="Isherwood J."/>
            <person name="James R."/>
            <person name="Johnson C."/>
            <person name="Johnson D."/>
            <person name="Joy A."/>
            <person name="Kay M."/>
            <person name="Kershaw J.K."/>
            <person name="Kibukawa M."/>
            <person name="Kimberley A.M."/>
            <person name="King A."/>
            <person name="Knights A.J."/>
            <person name="Lad H."/>
            <person name="Laird G."/>
            <person name="Lawlor S."/>
            <person name="Leongamornlert D.A."/>
            <person name="Lloyd D.M."/>
            <person name="Loveland J."/>
            <person name="Lovell J."/>
            <person name="Lush M.J."/>
            <person name="Lyne R."/>
            <person name="Martin S."/>
            <person name="Mashreghi-Mohammadi M."/>
            <person name="Matthews L."/>
            <person name="Matthews N.S.W."/>
            <person name="McLaren S."/>
            <person name="Milne S."/>
            <person name="Mistry S."/>
            <person name="Moore M.J.F."/>
            <person name="Nickerson T."/>
            <person name="O'Dell C.N."/>
            <person name="Oliver K."/>
            <person name="Palmeiri A."/>
            <person name="Palmer S.A."/>
            <person name="Parker A."/>
            <person name="Patel D."/>
            <person name="Pearce A.V."/>
            <person name="Peck A.I."/>
            <person name="Pelan S."/>
            <person name="Phelps K."/>
            <person name="Phillimore B.J."/>
            <person name="Plumb R."/>
            <person name="Rajan J."/>
            <person name="Raymond C."/>
            <person name="Rouse G."/>
            <person name="Saenphimmachak C."/>
            <person name="Sehra H.K."/>
            <person name="Sheridan E."/>
            <person name="Shownkeen R."/>
            <person name="Sims S."/>
            <person name="Skuce C.D."/>
            <person name="Smith M."/>
            <person name="Steward C."/>
            <person name="Subramanian S."/>
            <person name="Sycamore N."/>
            <person name="Tracey A."/>
            <person name="Tromans A."/>
            <person name="Van Helmond Z."/>
            <person name="Wall M."/>
            <person name="Wallis J.M."/>
            <person name="White S."/>
            <person name="Whitehead S.L."/>
            <person name="Wilkinson J.E."/>
            <person name="Willey D.L."/>
            <person name="Williams H."/>
            <person name="Wilming L."/>
            <person name="Wray P.W."/>
            <person name="Wu Z."/>
            <person name="Coulson A."/>
            <person name="Vaudin M."/>
            <person name="Sulston J.E."/>
            <person name="Durbin R.M."/>
            <person name="Hubbard T."/>
            <person name="Wooster R."/>
            <person name="Dunham I."/>
            <person name="Carter N.P."/>
            <person name="McVean G."/>
            <person name="Ross M.T."/>
            <person name="Harrow J."/>
            <person name="Olson M.V."/>
            <person name="Beck S."/>
            <person name="Rogers J."/>
            <person name="Bentley D.R."/>
        </authorList>
    </citation>
    <scope>NUCLEOTIDE SEQUENCE [LARGE SCALE GENOMIC DNA]</scope>
</reference>
<reference key="3">
    <citation type="journal article" date="2004" name="Genome Res.">
        <title>The status, quality, and expansion of the NIH full-length cDNA project: the Mammalian Gene Collection (MGC).</title>
        <authorList>
            <consortium name="The MGC Project Team"/>
        </authorList>
    </citation>
    <scope>NUCLEOTIDE SEQUENCE [LARGE SCALE MRNA] OF 134-605 (ISOFORM 4)</scope>
    <scope>NUCLEOTIDE SEQUENCE [LARGE SCALE MRNA] OF 208-605 (ISOFORM 3)</scope>
    <source>
        <tissue>Lung</tissue>
        <tissue>Pituitary</tissue>
    </source>
</reference>
<reference key="4">
    <citation type="journal article" date="2004" name="Nat. Genet.">
        <title>Complete sequencing and characterization of 21,243 full-length human cDNAs.</title>
        <authorList>
            <person name="Ota T."/>
            <person name="Suzuki Y."/>
            <person name="Nishikawa T."/>
            <person name="Otsuki T."/>
            <person name="Sugiyama T."/>
            <person name="Irie R."/>
            <person name="Wakamatsu A."/>
            <person name="Hayashi K."/>
            <person name="Sato H."/>
            <person name="Nagai K."/>
            <person name="Kimura K."/>
            <person name="Makita H."/>
            <person name="Sekine M."/>
            <person name="Obayashi M."/>
            <person name="Nishi T."/>
            <person name="Shibahara T."/>
            <person name="Tanaka T."/>
            <person name="Ishii S."/>
            <person name="Yamamoto J."/>
            <person name="Saito K."/>
            <person name="Kawai Y."/>
            <person name="Isono Y."/>
            <person name="Nakamura Y."/>
            <person name="Nagahari K."/>
            <person name="Murakami K."/>
            <person name="Yasuda T."/>
            <person name="Iwayanagi T."/>
            <person name="Wagatsuma M."/>
            <person name="Shiratori A."/>
            <person name="Sudo H."/>
            <person name="Hosoiri T."/>
            <person name="Kaku Y."/>
            <person name="Kodaira H."/>
            <person name="Kondo H."/>
            <person name="Sugawara M."/>
            <person name="Takahashi M."/>
            <person name="Kanda K."/>
            <person name="Yokoi T."/>
            <person name="Furuya T."/>
            <person name="Kikkawa E."/>
            <person name="Omura Y."/>
            <person name="Abe K."/>
            <person name="Kamihara K."/>
            <person name="Katsuta N."/>
            <person name="Sato K."/>
            <person name="Tanikawa M."/>
            <person name="Yamazaki M."/>
            <person name="Ninomiya K."/>
            <person name="Ishibashi T."/>
            <person name="Yamashita H."/>
            <person name="Murakawa K."/>
            <person name="Fujimori K."/>
            <person name="Tanai H."/>
            <person name="Kimata M."/>
            <person name="Watanabe M."/>
            <person name="Hiraoka S."/>
            <person name="Chiba Y."/>
            <person name="Ishida S."/>
            <person name="Ono Y."/>
            <person name="Takiguchi S."/>
            <person name="Watanabe S."/>
            <person name="Yosida M."/>
            <person name="Hotuta T."/>
            <person name="Kusano J."/>
            <person name="Kanehori K."/>
            <person name="Takahashi-Fujii A."/>
            <person name="Hara H."/>
            <person name="Tanase T.-O."/>
            <person name="Nomura Y."/>
            <person name="Togiya S."/>
            <person name="Komai F."/>
            <person name="Hara R."/>
            <person name="Takeuchi K."/>
            <person name="Arita M."/>
            <person name="Imose N."/>
            <person name="Musashino K."/>
            <person name="Yuuki H."/>
            <person name="Oshima A."/>
            <person name="Sasaki N."/>
            <person name="Aotsuka S."/>
            <person name="Yoshikawa Y."/>
            <person name="Matsunawa H."/>
            <person name="Ichihara T."/>
            <person name="Shiohata N."/>
            <person name="Sano S."/>
            <person name="Moriya S."/>
            <person name="Momiyama H."/>
            <person name="Satoh N."/>
            <person name="Takami S."/>
            <person name="Terashima Y."/>
            <person name="Suzuki O."/>
            <person name="Nakagawa S."/>
            <person name="Senoh A."/>
            <person name="Mizoguchi H."/>
            <person name="Goto Y."/>
            <person name="Shimizu F."/>
            <person name="Wakebe H."/>
            <person name="Hishigaki H."/>
            <person name="Watanabe T."/>
            <person name="Sugiyama A."/>
            <person name="Takemoto M."/>
            <person name="Kawakami B."/>
            <person name="Yamazaki M."/>
            <person name="Watanabe K."/>
            <person name="Kumagai A."/>
            <person name="Itakura S."/>
            <person name="Fukuzumi Y."/>
            <person name="Fujimori Y."/>
            <person name="Komiyama M."/>
            <person name="Tashiro H."/>
            <person name="Tanigami A."/>
            <person name="Fujiwara T."/>
            <person name="Ono T."/>
            <person name="Yamada K."/>
            <person name="Fujii Y."/>
            <person name="Ozaki K."/>
            <person name="Hirao M."/>
            <person name="Ohmori Y."/>
            <person name="Kawabata A."/>
            <person name="Hikiji T."/>
            <person name="Kobatake N."/>
            <person name="Inagaki H."/>
            <person name="Ikema Y."/>
            <person name="Okamoto S."/>
            <person name="Okitani R."/>
            <person name="Kawakami T."/>
            <person name="Noguchi S."/>
            <person name="Itoh T."/>
            <person name="Shigeta K."/>
            <person name="Senba T."/>
            <person name="Matsumura K."/>
            <person name="Nakajima Y."/>
            <person name="Mizuno T."/>
            <person name="Morinaga M."/>
            <person name="Sasaki M."/>
            <person name="Togashi T."/>
            <person name="Oyama M."/>
            <person name="Hata H."/>
            <person name="Watanabe M."/>
            <person name="Komatsu T."/>
            <person name="Mizushima-Sugano J."/>
            <person name="Satoh T."/>
            <person name="Shirai Y."/>
            <person name="Takahashi Y."/>
            <person name="Nakagawa K."/>
            <person name="Okumura K."/>
            <person name="Nagase T."/>
            <person name="Nomura N."/>
            <person name="Kikuchi H."/>
            <person name="Masuho Y."/>
            <person name="Yamashita R."/>
            <person name="Nakai K."/>
            <person name="Yada T."/>
            <person name="Nakamura Y."/>
            <person name="Ohara O."/>
            <person name="Isogai T."/>
            <person name="Sugano S."/>
        </authorList>
    </citation>
    <scope>NUCLEOTIDE SEQUENCE [LARGE SCALE MRNA] OF 200-605 (ISOFORM 3)</scope>
    <source>
        <tissue>Hepatoma</tissue>
    </source>
</reference>
<reference key="5">
    <citation type="journal article" date="2005" name="Dev. Cell">
        <title>Dynamin and the actin cytoskeleton cooperatively regulate plasma membrane invagination by BAR and F-BAR proteins.</title>
        <authorList>
            <person name="Itoh T."/>
            <person name="Erdmann K.S."/>
            <person name="Roux A."/>
            <person name="Habermann B."/>
            <person name="Werner H."/>
            <person name="De Camilli P."/>
        </authorList>
    </citation>
    <scope>FUNCTION</scope>
    <scope>INTERACTION WITH DNM1 AND WASL</scope>
</reference>
<reference key="6">
    <citation type="journal article" date="2006" name="Exp. Cell Res.">
        <title>The diaphanous-related formin DAAM1 collaborates with the Rho GTPases RhoA and Cdc42, CIP4 and Src in regulating cell morphogenesis and actin dynamics.</title>
        <authorList>
            <person name="Aspenstroem P."/>
            <person name="Richnau N."/>
            <person name="Johansson A.-S."/>
        </authorList>
    </citation>
    <scope>INTERACTION WITH DAAM1; DIAPH1 AND DIAPH2</scope>
</reference>
<reference key="7">
    <citation type="journal article" date="2006" name="J. Cell Biol.">
        <title>Coordination between the actin cytoskeleton and membrane deformation by a novel membrane tubulation domain of PCH proteins is involved in endocytosis.</title>
        <authorList>
            <person name="Tsujita K."/>
            <person name="Suetsugu S."/>
            <person name="Sasaki N."/>
            <person name="Furutani M."/>
            <person name="Oikawa T."/>
            <person name="Takenawa T."/>
        </authorList>
    </citation>
    <scope>INTERACTION WITH DNM2 AND WASL</scope>
</reference>
<reference key="8">
    <citation type="journal article" date="2006" name="J. Cell Sci.">
        <title>Tuba stimulates intracellular N-WASP-dependent actin assembly.</title>
        <authorList>
            <person name="Kovacs E.M."/>
            <person name="Makar R.S."/>
            <person name="Gertler F.B."/>
        </authorList>
    </citation>
    <scope>SUBCELLULAR LOCATION</scope>
</reference>
<reference key="9">
    <citation type="journal article" date="2008" name="Proc. Natl. Acad. Sci. U.S.A.">
        <title>A quantitative atlas of mitotic phosphorylation.</title>
        <authorList>
            <person name="Dephoure N."/>
            <person name="Zhou C."/>
            <person name="Villen J."/>
            <person name="Beausoleil S.A."/>
            <person name="Bakalarski C.E."/>
            <person name="Elledge S.J."/>
            <person name="Gygi S.P."/>
        </authorList>
    </citation>
    <scope>PHOSPHORYLATION [LARGE SCALE ANALYSIS] AT SER-295; SER-488 AND SER-501</scope>
    <scope>IDENTIFICATION BY MASS SPECTROMETRY [LARGE SCALE ANALYSIS]</scope>
    <source>
        <tissue>Cervix carcinoma</tissue>
    </source>
</reference>
<reference key="10">
    <citation type="journal article" date="2009" name="Anal. Chem.">
        <title>Lys-N and trypsin cover complementary parts of the phosphoproteome in a refined SCX-based approach.</title>
        <authorList>
            <person name="Gauci S."/>
            <person name="Helbig A.O."/>
            <person name="Slijper M."/>
            <person name="Krijgsveld J."/>
            <person name="Heck A.J."/>
            <person name="Mohammed S."/>
        </authorList>
    </citation>
    <scope>IDENTIFICATION BY MASS SPECTROMETRY [LARGE SCALE ANALYSIS]</scope>
</reference>
<reference key="11">
    <citation type="journal article" date="2009" name="J. Immunol.">
        <title>A novel hybrid yeast-human network analysis reveals an essential role for FNBP1L in antibacterial autophagy.</title>
        <authorList>
            <person name="Huett A."/>
            <person name="Ng A."/>
            <person name="Cao Z."/>
            <person name="Kuballa P."/>
            <person name="Komatsu M."/>
            <person name="Daly M.J."/>
            <person name="Podolsky D.K."/>
            <person name="Xavier R.J."/>
        </authorList>
    </citation>
    <scope>FUNCTION IN AUTOPHAGY</scope>
    <scope>INTERACTION WITH ATG3</scope>
</reference>
<reference key="12">
    <citation type="journal article" date="2009" name="PLoS Genet.">
        <title>Requirements for F-BAR proteins TOCA-1 and TOCA-2 in actin dynamics and membrane trafficking during Caenorhabditis elegans oocyte growth and embryonic epidermal morphogenesis.</title>
        <authorList>
            <person name="Giuliani C."/>
            <person name="Troglio F."/>
            <person name="Bai Z."/>
            <person name="Patel F.B."/>
            <person name="Zucconi A."/>
            <person name="Malabarba M.G."/>
            <person name="Disanza A."/>
            <person name="Stradal T.B."/>
            <person name="Cassata G."/>
            <person name="Confalonieri S."/>
            <person name="Hardin J.D."/>
            <person name="Soto M.C."/>
            <person name="Grant B.D."/>
            <person name="Scita G."/>
        </authorList>
    </citation>
    <scope>INTERACTION WITH ABI1; WASF2; CDC42 AND WIPF1</scope>
</reference>
<reference key="13">
    <citation type="journal article" date="2010" name="Sci. Signal.">
        <title>Quantitative phosphoproteomics reveals widespread full phosphorylation site occupancy during mitosis.</title>
        <authorList>
            <person name="Olsen J.V."/>
            <person name="Vermeulen M."/>
            <person name="Santamaria A."/>
            <person name="Kumar C."/>
            <person name="Miller M.L."/>
            <person name="Jensen L.J."/>
            <person name="Gnad F."/>
            <person name="Cox J."/>
            <person name="Jensen T.S."/>
            <person name="Nigg E.A."/>
            <person name="Brunak S."/>
            <person name="Mann M."/>
        </authorList>
    </citation>
    <scope>PHOSPHORYLATION [LARGE SCALE ANALYSIS] AT SER-295; SER-488 AND SER-501</scope>
    <scope>IDENTIFICATION BY MASS SPECTROMETRY [LARGE SCALE ANALYSIS]</scope>
    <source>
        <tissue>Cervix carcinoma</tissue>
    </source>
</reference>
<reference key="14">
    <citation type="journal article" date="2011" name="BMC Syst. Biol.">
        <title>Initial characterization of the human central proteome.</title>
        <authorList>
            <person name="Burkard T.R."/>
            <person name="Planyavsky M."/>
            <person name="Kaupe I."/>
            <person name="Breitwieser F.P."/>
            <person name="Buerckstuemmer T."/>
            <person name="Bennett K.L."/>
            <person name="Superti-Furga G."/>
            <person name="Colinge J."/>
        </authorList>
    </citation>
    <scope>IDENTIFICATION BY MASS SPECTROMETRY [LARGE SCALE ANALYSIS]</scope>
</reference>
<reference key="15">
    <citation type="journal article" date="2011" name="Sci. Signal.">
        <title>System-wide temporal characterization of the proteome and phosphoproteome of human embryonic stem cell differentiation.</title>
        <authorList>
            <person name="Rigbolt K.T."/>
            <person name="Prokhorova T.A."/>
            <person name="Akimov V."/>
            <person name="Henningsen J."/>
            <person name="Johansen P.T."/>
            <person name="Kratchmarova I."/>
            <person name="Kassem M."/>
            <person name="Mann M."/>
            <person name="Olsen J.V."/>
            <person name="Blagoev B."/>
        </authorList>
    </citation>
    <scope>PHOSPHORYLATION [LARGE SCALE ANALYSIS] AT SER-295; SER-488 AND SER-501</scope>
    <scope>IDENTIFICATION BY MASS SPECTROMETRY [LARGE SCALE ANALYSIS]</scope>
</reference>
<reference key="16">
    <citation type="journal article" date="2013" name="J. Proteome Res.">
        <title>Toward a comprehensive characterization of a human cancer cell phosphoproteome.</title>
        <authorList>
            <person name="Zhou H."/>
            <person name="Di Palma S."/>
            <person name="Preisinger C."/>
            <person name="Peng M."/>
            <person name="Polat A.N."/>
            <person name="Heck A.J."/>
            <person name="Mohammed S."/>
        </authorList>
    </citation>
    <scope>PHOSPHORYLATION [LARGE SCALE ANALYSIS] AT SER-295; SER-488 AND SER-501</scope>
    <scope>IDENTIFICATION BY MASS SPECTROMETRY [LARGE SCALE ANALYSIS]</scope>
    <source>
        <tissue>Cervix carcinoma</tissue>
        <tissue>Erythroleukemia</tissue>
    </source>
</reference>
<reference key="17">
    <citation type="journal article" date="2014" name="J. Proteomics">
        <title>An enzyme assisted RP-RPLC approach for in-depth analysis of human liver phosphoproteome.</title>
        <authorList>
            <person name="Bian Y."/>
            <person name="Song C."/>
            <person name="Cheng K."/>
            <person name="Dong M."/>
            <person name="Wang F."/>
            <person name="Huang J."/>
            <person name="Sun D."/>
            <person name="Wang L."/>
            <person name="Ye M."/>
            <person name="Zou H."/>
        </authorList>
    </citation>
    <scope>PHOSPHORYLATION [LARGE SCALE ANALYSIS] AT SER-295; SER-488 AND SER-501</scope>
    <scope>IDENTIFICATION BY MASS SPECTROMETRY [LARGE SCALE ANALYSIS]</scope>
    <source>
        <tissue>Liver</tissue>
    </source>
</reference>
<dbReference type="EMBL" id="AY514449">
    <property type="protein sequence ID" value="AAR98814.1"/>
    <property type="molecule type" value="mRNA"/>
</dbReference>
<dbReference type="EMBL" id="AC095034">
    <property type="status" value="NOT_ANNOTATED_CDS"/>
    <property type="molecule type" value="Genomic_DNA"/>
</dbReference>
<dbReference type="EMBL" id="AL109613">
    <property type="status" value="NOT_ANNOTATED_CDS"/>
    <property type="molecule type" value="Genomic_DNA"/>
</dbReference>
<dbReference type="EMBL" id="AL512651">
    <property type="status" value="NOT_ANNOTATED_CDS"/>
    <property type="molecule type" value="Genomic_DNA"/>
</dbReference>
<dbReference type="EMBL" id="BC062477">
    <property type="protein sequence ID" value="AAH62477.1"/>
    <property type="molecule type" value="mRNA"/>
</dbReference>
<dbReference type="EMBL" id="BC074891">
    <property type="protein sequence ID" value="AAH74891.1"/>
    <property type="molecule type" value="mRNA"/>
</dbReference>
<dbReference type="EMBL" id="BC074892">
    <property type="protein sequence ID" value="AAH74892.1"/>
    <property type="molecule type" value="mRNA"/>
</dbReference>
<dbReference type="EMBL" id="AK000282">
    <property type="protein sequence ID" value="BAA91051.1"/>
    <property type="status" value="ALT_INIT"/>
    <property type="molecule type" value="mRNA"/>
</dbReference>
<dbReference type="CCDS" id="CCDS53343.1">
    <molecule id="Q5T0N5-1"/>
</dbReference>
<dbReference type="CCDS" id="CCDS53344.1">
    <molecule id="Q5T0N5-4"/>
</dbReference>
<dbReference type="CCDS" id="CCDS60192.1">
    <molecule id="Q5T0N5-3"/>
</dbReference>
<dbReference type="RefSeq" id="NP_001020119.1">
    <molecule id="Q5T0N5-4"/>
    <property type="nucleotide sequence ID" value="NM_001024948.3"/>
</dbReference>
<dbReference type="RefSeq" id="NP_001157945.1">
    <molecule id="Q5T0N5-1"/>
    <property type="nucleotide sequence ID" value="NM_001164473.3"/>
</dbReference>
<dbReference type="RefSeq" id="NP_060207.2">
    <molecule id="Q5T0N5-3"/>
    <property type="nucleotide sequence ID" value="NM_017737.4"/>
</dbReference>
<dbReference type="SMR" id="Q5T0N5"/>
<dbReference type="BioGRID" id="120222">
    <property type="interactions" value="54"/>
</dbReference>
<dbReference type="FunCoup" id="Q5T0N5">
    <property type="interactions" value="2498"/>
</dbReference>
<dbReference type="IntAct" id="Q5T0N5">
    <property type="interactions" value="33"/>
</dbReference>
<dbReference type="MINT" id="Q5T0N5"/>
<dbReference type="STRING" id="9606.ENSP00000271234"/>
<dbReference type="GlyGen" id="Q5T0N5">
    <property type="glycosylation" value="1 site, 1 O-linked glycan (1 site)"/>
</dbReference>
<dbReference type="iPTMnet" id="Q5T0N5"/>
<dbReference type="MetOSite" id="Q5T0N5"/>
<dbReference type="PhosphoSitePlus" id="Q5T0N5"/>
<dbReference type="BioMuta" id="FNBP1L"/>
<dbReference type="DMDM" id="118572313"/>
<dbReference type="jPOST" id="Q5T0N5"/>
<dbReference type="MassIVE" id="Q5T0N5"/>
<dbReference type="PaxDb" id="9606-ENSP00000271234"/>
<dbReference type="PeptideAtlas" id="Q5T0N5"/>
<dbReference type="ProteomicsDB" id="64183">
    <molecule id="Q5T0N5-1"/>
</dbReference>
<dbReference type="ProteomicsDB" id="64184">
    <molecule id="Q5T0N5-2"/>
</dbReference>
<dbReference type="ProteomicsDB" id="64185">
    <molecule id="Q5T0N5-3"/>
</dbReference>
<dbReference type="ProteomicsDB" id="64186">
    <molecule id="Q5T0N5-4"/>
</dbReference>
<dbReference type="ProteomicsDB" id="64187">
    <molecule id="Q5T0N5-5"/>
</dbReference>
<dbReference type="Pumba" id="Q5T0N5"/>
<dbReference type="Antibodypedia" id="33658">
    <property type="antibodies" value="172 antibodies from 29 providers"/>
</dbReference>
<dbReference type="DNASU" id="54874"/>
<dbReference type="Ensembl" id="ENST00000260506.12">
    <molecule id="Q5T0N5-4"/>
    <property type="protein sequence ID" value="ENSP00000260506.8"/>
    <property type="gene ID" value="ENSG00000137942.18"/>
</dbReference>
<dbReference type="Ensembl" id="ENST00000271234.13">
    <molecule id="Q5T0N5-1"/>
    <property type="protein sequence ID" value="ENSP00000271234.7"/>
    <property type="gene ID" value="ENSG00000137942.18"/>
</dbReference>
<dbReference type="Ensembl" id="ENST00000370253.6">
    <molecule id="Q5T0N5-3"/>
    <property type="protein sequence ID" value="ENSP00000359275.2"/>
    <property type="gene ID" value="ENSG00000137942.18"/>
</dbReference>
<dbReference type="GeneID" id="54874"/>
<dbReference type="KEGG" id="hsa:54874"/>
<dbReference type="MANE-Select" id="ENST00000271234.13">
    <property type="protein sequence ID" value="ENSP00000271234.7"/>
    <property type="RefSeq nucleotide sequence ID" value="NM_001164473.3"/>
    <property type="RefSeq protein sequence ID" value="NP_001157945.1"/>
</dbReference>
<dbReference type="UCSC" id="uc001dpv.4">
    <molecule id="Q5T0N5-1"/>
    <property type="organism name" value="human"/>
</dbReference>
<dbReference type="AGR" id="HGNC:20851"/>
<dbReference type="CTD" id="54874"/>
<dbReference type="DisGeNET" id="54874"/>
<dbReference type="GeneCards" id="FNBP1L"/>
<dbReference type="HGNC" id="HGNC:20851">
    <property type="gene designation" value="FNBP1L"/>
</dbReference>
<dbReference type="HPA" id="ENSG00000137942">
    <property type="expression patterns" value="Low tissue specificity"/>
</dbReference>
<dbReference type="MIM" id="608848">
    <property type="type" value="gene"/>
</dbReference>
<dbReference type="neXtProt" id="NX_Q5T0N5"/>
<dbReference type="OpenTargets" id="ENSG00000137942"/>
<dbReference type="PharmGKB" id="PA128394675"/>
<dbReference type="VEuPathDB" id="HostDB:ENSG00000137942"/>
<dbReference type="eggNOG" id="KOG3565">
    <property type="taxonomic scope" value="Eukaryota"/>
</dbReference>
<dbReference type="GeneTree" id="ENSGT00950000183047"/>
<dbReference type="HOGENOM" id="CLU_023320_0_1_1"/>
<dbReference type="InParanoid" id="Q5T0N5"/>
<dbReference type="OMA" id="YADGWWE"/>
<dbReference type="OrthoDB" id="8783038at2759"/>
<dbReference type="PAN-GO" id="Q5T0N5">
    <property type="GO annotations" value="0 GO annotations based on evolutionary models"/>
</dbReference>
<dbReference type="PhylomeDB" id="Q5T0N5"/>
<dbReference type="TreeFam" id="TF351162"/>
<dbReference type="PathwayCommons" id="Q5T0N5"/>
<dbReference type="Reactome" id="R-HSA-8856828">
    <property type="pathway name" value="Clathrin-mediated endocytosis"/>
</dbReference>
<dbReference type="Reactome" id="R-HSA-9013148">
    <property type="pathway name" value="CDC42 GTPase cycle"/>
</dbReference>
<dbReference type="Reactome" id="R-HSA-9013409">
    <property type="pathway name" value="RHOJ GTPase cycle"/>
</dbReference>
<dbReference type="SignaLink" id="Q5T0N5"/>
<dbReference type="BioGRID-ORCS" id="54874">
    <property type="hits" value="7 hits in 1154 CRISPR screens"/>
</dbReference>
<dbReference type="ChiTaRS" id="FNBP1L">
    <property type="organism name" value="human"/>
</dbReference>
<dbReference type="GeneWiki" id="FNBP1L"/>
<dbReference type="GenomeRNAi" id="54874"/>
<dbReference type="Pharos" id="Q5T0N5">
    <property type="development level" value="Tbio"/>
</dbReference>
<dbReference type="PRO" id="PR:Q5T0N5"/>
<dbReference type="Proteomes" id="UP000005640">
    <property type="component" value="Chromosome 1"/>
</dbReference>
<dbReference type="RNAct" id="Q5T0N5">
    <property type="molecule type" value="protein"/>
</dbReference>
<dbReference type="Bgee" id="ENSG00000137942">
    <property type="expression patterns" value="Expressed in cortical plate and 209 other cell types or tissues"/>
</dbReference>
<dbReference type="ExpressionAtlas" id="Q5T0N5">
    <property type="expression patterns" value="baseline and differential"/>
</dbReference>
<dbReference type="GO" id="GO:0005938">
    <property type="term" value="C:cell cortex"/>
    <property type="evidence" value="ECO:0007669"/>
    <property type="project" value="UniProtKB-SubCell"/>
</dbReference>
<dbReference type="GO" id="GO:0005737">
    <property type="term" value="C:cytoplasm"/>
    <property type="evidence" value="ECO:0000314"/>
    <property type="project" value="MGI"/>
</dbReference>
<dbReference type="GO" id="GO:0031410">
    <property type="term" value="C:cytoplasmic vesicle"/>
    <property type="evidence" value="ECO:0000314"/>
    <property type="project" value="BHF-UCL"/>
</dbReference>
<dbReference type="GO" id="GO:0005856">
    <property type="term" value="C:cytoskeleton"/>
    <property type="evidence" value="ECO:0007669"/>
    <property type="project" value="UniProtKB-SubCell"/>
</dbReference>
<dbReference type="GO" id="GO:0005829">
    <property type="term" value="C:cytosol"/>
    <property type="evidence" value="ECO:0000314"/>
    <property type="project" value="HPA"/>
</dbReference>
<dbReference type="GO" id="GO:0043231">
    <property type="term" value="C:intracellular membrane-bounded organelle"/>
    <property type="evidence" value="ECO:0000314"/>
    <property type="project" value="HPA"/>
</dbReference>
<dbReference type="GO" id="GO:0005886">
    <property type="term" value="C:plasma membrane"/>
    <property type="evidence" value="ECO:0007669"/>
    <property type="project" value="UniProtKB-SubCell"/>
</dbReference>
<dbReference type="GO" id="GO:0045296">
    <property type="term" value="F:cadherin binding"/>
    <property type="evidence" value="ECO:0007005"/>
    <property type="project" value="BHF-UCL"/>
</dbReference>
<dbReference type="GO" id="GO:0051020">
    <property type="term" value="F:GTPase binding"/>
    <property type="evidence" value="ECO:0000353"/>
    <property type="project" value="UniProtKB"/>
</dbReference>
<dbReference type="GO" id="GO:0008289">
    <property type="term" value="F:lipid binding"/>
    <property type="evidence" value="ECO:0007669"/>
    <property type="project" value="UniProtKB-KW"/>
</dbReference>
<dbReference type="GO" id="GO:0006914">
    <property type="term" value="P:autophagy"/>
    <property type="evidence" value="ECO:0007669"/>
    <property type="project" value="UniProtKB-KW"/>
</dbReference>
<dbReference type="GO" id="GO:0060271">
    <property type="term" value="P:cilium assembly"/>
    <property type="evidence" value="ECO:0000315"/>
    <property type="project" value="MGI"/>
</dbReference>
<dbReference type="GO" id="GO:0072583">
    <property type="term" value="P:clathrin-dependent endocytosis"/>
    <property type="evidence" value="ECO:0000314"/>
    <property type="project" value="BHF-UCL"/>
</dbReference>
<dbReference type="GO" id="GO:0010324">
    <property type="term" value="P:membrane invagination"/>
    <property type="evidence" value="ECO:0000314"/>
    <property type="project" value="BHF-UCL"/>
</dbReference>
<dbReference type="GO" id="GO:0097320">
    <property type="term" value="P:plasma membrane tubulation"/>
    <property type="evidence" value="ECO:0000314"/>
    <property type="project" value="BHF-UCL"/>
</dbReference>
<dbReference type="GO" id="GO:0051491">
    <property type="term" value="P:positive regulation of filopodium assembly"/>
    <property type="evidence" value="ECO:0000314"/>
    <property type="project" value="BHF-UCL"/>
</dbReference>
<dbReference type="GO" id="GO:0007165">
    <property type="term" value="P:signal transduction"/>
    <property type="evidence" value="ECO:0007669"/>
    <property type="project" value="InterPro"/>
</dbReference>
<dbReference type="GO" id="GO:0006900">
    <property type="term" value="P:vesicle budding from membrane"/>
    <property type="evidence" value="ECO:0000314"/>
    <property type="project" value="BHF-UCL"/>
</dbReference>
<dbReference type="GO" id="GO:0016050">
    <property type="term" value="P:vesicle organization"/>
    <property type="evidence" value="ECO:0000314"/>
    <property type="project" value="BHF-UCL"/>
</dbReference>
<dbReference type="GO" id="GO:0030050">
    <property type="term" value="P:vesicle transport along actin filament"/>
    <property type="evidence" value="ECO:0000314"/>
    <property type="project" value="BHF-UCL"/>
</dbReference>
<dbReference type="CDD" id="cd07675">
    <property type="entry name" value="F-BAR_FNBP1L"/>
    <property type="match status" value="1"/>
</dbReference>
<dbReference type="CDD" id="cd11628">
    <property type="entry name" value="HR1_CIP4_FNBP1L"/>
    <property type="match status" value="1"/>
</dbReference>
<dbReference type="CDD" id="cd12072">
    <property type="entry name" value="SH3_FNBP1L"/>
    <property type="match status" value="1"/>
</dbReference>
<dbReference type="FunFam" id="1.20.1270.60:FF:000002">
    <property type="entry name" value="Formin-binding protein 1-like isoform 1"/>
    <property type="match status" value="1"/>
</dbReference>
<dbReference type="FunFam" id="2.30.30.40:FF:000017">
    <property type="entry name" value="Formin-binding protein 1-like isoform 1"/>
    <property type="match status" value="1"/>
</dbReference>
<dbReference type="Gene3D" id="6.10.140.470">
    <property type="match status" value="1"/>
</dbReference>
<dbReference type="Gene3D" id="1.20.1270.60">
    <property type="entry name" value="Arfaptin homology (AH) domain/BAR domain"/>
    <property type="match status" value="1"/>
</dbReference>
<dbReference type="Gene3D" id="2.30.30.40">
    <property type="entry name" value="SH3 Domains"/>
    <property type="match status" value="1"/>
</dbReference>
<dbReference type="InterPro" id="IPR027267">
    <property type="entry name" value="AH/BAR_dom_sf"/>
</dbReference>
<dbReference type="InterPro" id="IPR031160">
    <property type="entry name" value="F_BAR"/>
</dbReference>
<dbReference type="InterPro" id="IPR001060">
    <property type="entry name" value="FCH_dom"/>
</dbReference>
<dbReference type="InterPro" id="IPR035494">
    <property type="entry name" value="FNBP1L_F-BAR"/>
</dbReference>
<dbReference type="InterPro" id="IPR035493">
    <property type="entry name" value="FNBP1L_SH3"/>
</dbReference>
<dbReference type="InterPro" id="IPR011072">
    <property type="entry name" value="HR1_rho-bd"/>
</dbReference>
<dbReference type="InterPro" id="IPR036028">
    <property type="entry name" value="SH3-like_dom_sf"/>
</dbReference>
<dbReference type="InterPro" id="IPR001452">
    <property type="entry name" value="SH3_domain"/>
</dbReference>
<dbReference type="PANTHER" id="PTHR15735">
    <property type="entry name" value="FCH AND DOUBLE SH3 DOMAINS PROTEIN"/>
    <property type="match status" value="1"/>
</dbReference>
<dbReference type="PANTHER" id="PTHR15735:SF14">
    <property type="entry name" value="FORMIN-BINDING PROTEIN 1-LIKE"/>
    <property type="match status" value="1"/>
</dbReference>
<dbReference type="Pfam" id="PF00611">
    <property type="entry name" value="FCH"/>
    <property type="match status" value="1"/>
</dbReference>
<dbReference type="Pfam" id="PF00018">
    <property type="entry name" value="SH3_1"/>
    <property type="match status" value="1"/>
</dbReference>
<dbReference type="SMART" id="SM00055">
    <property type="entry name" value="FCH"/>
    <property type="match status" value="1"/>
</dbReference>
<dbReference type="SMART" id="SM00326">
    <property type="entry name" value="SH3"/>
    <property type="match status" value="1"/>
</dbReference>
<dbReference type="SUPFAM" id="SSF103657">
    <property type="entry name" value="BAR/IMD domain-like"/>
    <property type="match status" value="1"/>
</dbReference>
<dbReference type="SUPFAM" id="SSF50044">
    <property type="entry name" value="SH3-domain"/>
    <property type="match status" value="1"/>
</dbReference>
<dbReference type="PROSITE" id="PS51741">
    <property type="entry name" value="F_BAR"/>
    <property type="match status" value="1"/>
</dbReference>
<dbReference type="PROSITE" id="PS51860">
    <property type="entry name" value="REM_1"/>
    <property type="match status" value="1"/>
</dbReference>
<dbReference type="PROSITE" id="PS50002">
    <property type="entry name" value="SH3"/>
    <property type="match status" value="1"/>
</dbReference>
<protein>
    <recommendedName>
        <fullName>Formin-binding protein 1-like</fullName>
    </recommendedName>
    <alternativeName>
        <fullName>Transducer of Cdc42-dependent actin assembly protein 1</fullName>
        <shortName>Toca-1</shortName>
    </alternativeName>
</protein>
<keyword id="KW-0025">Alternative splicing</keyword>
<keyword id="KW-0072">Autophagy</keyword>
<keyword id="KW-1003">Cell membrane</keyword>
<keyword id="KW-0175">Coiled coil</keyword>
<keyword id="KW-0963">Cytoplasm</keyword>
<keyword id="KW-0968">Cytoplasmic vesicle</keyword>
<keyword id="KW-0206">Cytoskeleton</keyword>
<keyword id="KW-0254">Endocytosis</keyword>
<keyword id="KW-0446">Lipid-binding</keyword>
<keyword id="KW-0472">Membrane</keyword>
<keyword id="KW-0597">Phosphoprotein</keyword>
<keyword id="KW-1267">Proteomics identification</keyword>
<keyword id="KW-1185">Reference proteome</keyword>
<keyword id="KW-0728">SH3 domain</keyword>
<sequence length="605" mass="70065">MSWGTELWDQFDSLDKHTQWGIDFLERYAKFVKERIEIEQNYAKQLRNLVKKYCPKRSSKDEEPRFTSCVAFFNILNELNDYAGQREVVAEEMAHRVYGELMRYAHDLKTERKMHLQEGRKAQQYLDMCWKQMDNSKKKFERECREAEKAQQSYERLDNDTNATKADVEKAKQQLNLRTHMADENKNEYAAQLQNFNGEQHKHFYVVIPQIYKQLQEMDERRTIKLSECYRGFADSERKVIPIISKCLEGMILAAKSVDERRDSQMVVDSFKSGFEPPGDFPFEDYSQHIYRTISDGTISASKQESGKMDAKTTVGKAKGKLWLFGKKPKPQSPPLTPTSLFTSSTPNGSQFLTFSIEPVHYCMNEIKTGKPRIPSFRSLKRGWSVKMGPALEDFSHLPPEQRRKKLQQRIDELNRELQKESDQKDALNKMKDVYEKNPQMGDPGSLQPKLAETMNNIDRLRMEIHKNEAWLSEVEGKTGGRGDRRHSSDINHLVTQGRESPEGSYTDDANQEVRGPPQQHGHHNEFDDEFEDDDPLPAIGHCKAIYPFDGHNEGTLAMKEGEVLYIIEEDKGDGWTRARRQNGEEGYVPTSYIDVTLEKNSKGS</sequence>
<comment type="function">
    <text evidence="7 8 12">Required to coordinate membrane tubulation with reorganization of the actin cytoskeleton during endocytosis. May bind to lipids such as phosphatidylinositol 4,5-bisphosphate and phosphatidylserine and promote membrane invagination and the formation of tubules. Also promotes CDC42-induced actin polymerization by activating the WASL/N-WASP-WASPIP/WIP complex, the predominant form of WASL/N-WASP in cells. Actin polymerization may promote the fission of membrane tubules to form endocytic vesicles. Essential for autophagy of intracellular bacterial pathogens.</text>
</comment>
<comment type="subunit">
    <text evidence="1 7 8 9 10 12 13">Homodimerizes, the dimers can polymerize end-to-end to form filamentous structures (By similarity). Interacts with GTP-bound CDC42 (PubMed:15260990). Interacts with DAAM1, DIAPH1, DIAPH2, DNM1, DNM2 and WASL/N-WASP (PubMed:16326391, PubMed:16418535, PubMed:16630611). Interacts with ATG3 (PubMed:19342671). Interacts (via SH3 domain) with ABI1, WASF2, CDC42 and WIPF1 (PubMed:19798448).</text>
</comment>
<comment type="interaction">
    <interactant intactId="EBI-714058">
        <id>Q5T0N5</id>
    </interactant>
    <interactant intactId="EBI-2625954">
        <id>P78325</id>
        <label>ADAM8</label>
    </interactant>
    <organismsDiffer>false</organismsDiffer>
    <experiments>2</experiments>
</comment>
<comment type="interaction">
    <interactant intactId="EBI-714058">
        <id>Q5T0N5</id>
    </interactant>
    <interactant intactId="EBI-2817289">
        <id>Q9Y4D1</id>
        <label>DAAM1</label>
    </interactant>
    <organismsDiffer>false</organismsDiffer>
    <experiments>2</experiments>
</comment>
<comment type="interaction">
    <interactant intactId="EBI-714058">
        <id>Q5T0N5</id>
    </interactant>
    <interactant intactId="EBI-1111248">
        <id>Q96RU3</id>
        <label>FNBP1</label>
    </interactant>
    <organismsDiffer>false</organismsDiffer>
    <experiments>2</experiments>
</comment>
<comment type="interaction">
    <interactant intactId="EBI-4403262">
        <id>Q5T0N5-3</id>
    </interactant>
    <interactant intactId="EBI-22229752">
        <id>Q8X482</id>
        <label>espF(U)</label>
    </interactant>
    <organismsDiffer>true</organismsDiffer>
    <experiments>3</experiments>
</comment>
<comment type="subcellular location">
    <subcellularLocation>
        <location evidence="11">Cytoplasm</location>
    </subcellularLocation>
    <subcellularLocation>
        <location evidence="1">Cytoplasm</location>
        <location evidence="1">Cytoskeleton</location>
    </subcellularLocation>
    <subcellularLocation>
        <location evidence="1">Cytoplasm</location>
        <location evidence="1">Cell cortex</location>
    </subcellularLocation>
    <subcellularLocation>
        <location evidence="1">Cytoplasmic vesicle</location>
    </subcellularLocation>
    <subcellularLocation>
        <location evidence="1">Cell membrane</location>
        <topology evidence="1">Peripheral membrane protein</topology>
        <orientation evidence="1">Cytoplasmic side</orientation>
    </subcellularLocation>
</comment>
<comment type="alternative products">
    <event type="alternative splicing"/>
    <isoform>
        <id>Q5T0N5-1</id>
        <name>1</name>
        <sequence type="displayed"/>
    </isoform>
    <isoform>
        <id>Q5T0N5-2</id>
        <name>2</name>
        <sequence type="described" ref="VSP_021710"/>
    </isoform>
    <isoform>
        <id>Q5T0N5-3</id>
        <name>3</name>
        <sequence type="described" ref="VSP_021709"/>
    </isoform>
    <isoform>
        <id>Q5T0N5-4</id>
        <name>4</name>
        <sequence type="described" ref="VSP_021709 VSP_021711"/>
    </isoform>
    <isoform>
        <id>Q5T0N5-5</id>
        <name>5</name>
        <sequence type="described" ref="VSP_021710 VSP_021711"/>
    </isoform>
</comment>
<comment type="domain">
    <text evidence="1">The F-BAR domain binds the phospholipid membrane with its concave surface. The end-to-end polymerization of dimers of these domains provides a curved surface that fits best membranes with around 600 A diameter, and may drive tubulation (By similarity).</text>
</comment>
<comment type="similarity">
    <text evidence="17">Belongs to the FNBP1 family.</text>
</comment>
<comment type="sequence caution" evidence="17">
    <conflict type="erroneous initiation">
        <sequence resource="EMBL-CDS" id="BAA91051"/>
    </conflict>
    <text>Truncated N-terminus.</text>
</comment>
<feature type="chain" id="PRO_0000261434" description="Formin-binding protein 1-like">
    <location>
        <begin position="1"/>
        <end position="605"/>
    </location>
</feature>
<feature type="domain" description="F-BAR" evidence="4">
    <location>
        <begin position="1"/>
        <end position="263"/>
    </location>
</feature>
<feature type="domain" description="REM-1" evidence="5">
    <location>
        <begin position="397"/>
        <end position="474"/>
    </location>
</feature>
<feature type="domain" description="SH3" evidence="3">
    <location>
        <begin position="538"/>
        <end position="599"/>
    </location>
</feature>
<feature type="region of interest" description="Interaction with CDC42">
    <location>
        <begin position="245"/>
        <end position="535"/>
    </location>
</feature>
<feature type="region of interest" description="Disordered" evidence="6">
    <location>
        <begin position="476"/>
        <end position="539"/>
    </location>
</feature>
<feature type="region of interest" description="Interaction with DNM1" evidence="8">
    <location>
        <begin position="522"/>
        <end position="605"/>
    </location>
</feature>
<feature type="region of interest" description="Interaction with DAAM1, DIAPH1 and DIAPH2" evidence="10">
    <location>
        <begin position="541"/>
        <end position="605"/>
    </location>
</feature>
<feature type="region of interest" description="Interaction with DNM2 and WASL" evidence="9">
    <location>
        <begin position="541"/>
        <end position="597"/>
    </location>
</feature>
<feature type="coiled-coil region" evidence="1">
    <location>
        <begin position="66"/>
        <end position="258"/>
    </location>
</feature>
<feature type="coiled-coil region" evidence="1">
    <location>
        <begin position="392"/>
        <end position="484"/>
    </location>
</feature>
<feature type="compositionally biased region" description="Basic and acidic residues" evidence="6">
    <location>
        <begin position="476"/>
        <end position="490"/>
    </location>
</feature>
<feature type="compositionally biased region" description="Acidic residues" evidence="6">
    <location>
        <begin position="527"/>
        <end position="536"/>
    </location>
</feature>
<feature type="site" description="Mediates end-to-end attachment of dimers" evidence="1">
    <location>
        <position position="165"/>
    </location>
</feature>
<feature type="modified residue" description="Phosphoserine" evidence="18 19 20 21 22">
    <location>
        <position position="295"/>
    </location>
</feature>
<feature type="modified residue" description="Phosphoserine" evidence="18 19 20 21 22">
    <location>
        <position position="488"/>
    </location>
</feature>
<feature type="modified residue" description="Phosphoserine" evidence="18 19 20 21 22">
    <location>
        <position position="501"/>
    </location>
</feature>
<feature type="modified residue" description="Phosphoserine" evidence="2">
    <location>
        <position position="505"/>
    </location>
</feature>
<feature type="splice variant" id="VSP_021709" description="In isoform 3 and isoform 4." evidence="14 15 16">
    <location>
        <begin position="331"/>
        <end position="388"/>
    </location>
</feature>
<feature type="splice variant" id="VSP_021710" description="In isoform 2 and isoform 5." evidence="17">
    <location>
        <begin position="384"/>
        <end position="388"/>
    </location>
</feature>
<feature type="splice variant" id="VSP_021711" description="In isoform 4 and isoform 5." evidence="16">
    <original>S</original>
    <variation>AVTYI</variation>
    <location>
        <position position="605"/>
    </location>
</feature>
<feature type="mutagenesis site" description="Impairs interaction with CDC42 and reduces CDC42-induced actin assembly." evidence="7">
    <original>MGD</original>
    <variation>IST</variation>
    <location>
        <begin position="441"/>
        <end position="443"/>
    </location>
</feature>
<feature type="mutagenesis site" description="Impairs interaction with WASL and reduces CDC42-induced actin assembly." evidence="7">
    <original>W</original>
    <variation>K</variation>
    <location>
        <position position="576"/>
    </location>
</feature>
<evidence type="ECO:0000250" key="1"/>
<evidence type="ECO:0000250" key="2">
    <source>
        <dbReference type="UniProtKB" id="Q8K012"/>
    </source>
</evidence>
<evidence type="ECO:0000255" key="3">
    <source>
        <dbReference type="PROSITE-ProRule" id="PRU00192"/>
    </source>
</evidence>
<evidence type="ECO:0000255" key="4">
    <source>
        <dbReference type="PROSITE-ProRule" id="PRU01077"/>
    </source>
</evidence>
<evidence type="ECO:0000255" key="5">
    <source>
        <dbReference type="PROSITE-ProRule" id="PRU01207"/>
    </source>
</evidence>
<evidence type="ECO:0000256" key="6">
    <source>
        <dbReference type="SAM" id="MobiDB-lite"/>
    </source>
</evidence>
<evidence type="ECO:0000269" key="7">
    <source>
    </source>
</evidence>
<evidence type="ECO:0000269" key="8">
    <source>
    </source>
</evidence>
<evidence type="ECO:0000269" key="9">
    <source>
    </source>
</evidence>
<evidence type="ECO:0000269" key="10">
    <source>
    </source>
</evidence>
<evidence type="ECO:0000269" key="11">
    <source>
    </source>
</evidence>
<evidence type="ECO:0000269" key="12">
    <source>
    </source>
</evidence>
<evidence type="ECO:0000269" key="13">
    <source>
    </source>
</evidence>
<evidence type="ECO:0000303" key="14">
    <source>
    </source>
</evidence>
<evidence type="ECO:0000303" key="15">
    <source>
    </source>
</evidence>
<evidence type="ECO:0000303" key="16">
    <source>
    </source>
</evidence>
<evidence type="ECO:0000305" key="17"/>
<evidence type="ECO:0007744" key="18">
    <source>
    </source>
</evidence>
<evidence type="ECO:0007744" key="19">
    <source>
    </source>
</evidence>
<evidence type="ECO:0007744" key="20">
    <source>
    </source>
</evidence>
<evidence type="ECO:0007744" key="21">
    <source>
    </source>
</evidence>
<evidence type="ECO:0007744" key="22">
    <source>
    </source>
</evidence>
<gene>
    <name type="primary">FNBP1L</name>
    <name type="synonym">C1orf39</name>
    <name type="synonym">TOCA1</name>
</gene>
<proteinExistence type="evidence at protein level"/>
<name>FBP1L_HUMAN</name>